<sequence length="211" mass="23712">MQAPHKEHLYKLLVIGDLGVGKTSIIKRYVHQNFSSHYRATIGVDFALKVLHWDPETVVRLQLWDIAGQERFGNMTRVYYREAMGAFIVFDVTRPATFEAVAKWKNDLDSKLSLPNGKPVSVVLLANKCDQGKDVLMNNGLKMDQFCKEHGFVGWFETSAKENINIDEASRCLVKHILANECDLMESIEPDVVKPHLTSTKVASCSGCAKS</sequence>
<keyword id="KW-0002">3D-structure</keyword>
<keyword id="KW-1003">Cell membrane</keyword>
<keyword id="KW-0968">Cytoplasmic vesicle</keyword>
<keyword id="KW-0342">GTP-binding</keyword>
<keyword id="KW-0378">Hydrolase</keyword>
<keyword id="KW-0449">Lipoprotein</keyword>
<keyword id="KW-0460">Magnesium</keyword>
<keyword id="KW-0472">Membrane</keyword>
<keyword id="KW-0479">Metal-binding</keyword>
<keyword id="KW-0547">Nucleotide-binding</keyword>
<keyword id="KW-0564">Palmitate</keyword>
<keyword id="KW-0636">Prenylation</keyword>
<keyword id="KW-0653">Protein transport</keyword>
<keyword id="KW-1267">Proteomics identification</keyword>
<keyword id="KW-1185">Reference proteome</keyword>
<keyword id="KW-0813">Transport</keyword>
<dbReference type="EC" id="3.6.5.2" evidence="1"/>
<dbReference type="EMBL" id="AF235022">
    <property type="protein sequence ID" value="AAG30731.1"/>
    <property type="molecule type" value="mRNA"/>
</dbReference>
<dbReference type="EMBL" id="BT009842">
    <property type="protein sequence ID" value="AAP88844.1"/>
    <property type="molecule type" value="mRNA"/>
</dbReference>
<dbReference type="EMBL" id="DQ178619">
    <property type="protein sequence ID" value="ABA03166.1"/>
    <property type="molecule type" value="Genomic_DNA"/>
</dbReference>
<dbReference type="EMBL" id="BC015808">
    <property type="protein sequence ID" value="AAH15808.1"/>
    <property type="molecule type" value="mRNA"/>
</dbReference>
<dbReference type="CCDS" id="CCDS8281.1"/>
<dbReference type="RefSeq" id="NP_071732.1">
    <property type="nucleotide sequence ID" value="NM_022337.3"/>
</dbReference>
<dbReference type="PDB" id="6HDU">
    <property type="method" value="X-ray"/>
    <property type="resolution" value="1.79 A"/>
    <property type="chains" value="A/B/C/D=1-181"/>
</dbReference>
<dbReference type="PDB" id="6S5H">
    <property type="method" value="X-ray"/>
    <property type="resolution" value="2.00 A"/>
    <property type="chains" value="A=1-207"/>
</dbReference>
<dbReference type="PDBsum" id="6HDU"/>
<dbReference type="PDBsum" id="6S5H"/>
<dbReference type="SMR" id="P57729"/>
<dbReference type="BioGRID" id="117198">
    <property type="interactions" value="35"/>
</dbReference>
<dbReference type="DIP" id="DIP-60520N"/>
<dbReference type="FunCoup" id="P57729">
    <property type="interactions" value="558"/>
</dbReference>
<dbReference type="IntAct" id="P57729">
    <property type="interactions" value="35"/>
</dbReference>
<dbReference type="STRING" id="9606.ENSP00000243662"/>
<dbReference type="iPTMnet" id="P57729"/>
<dbReference type="PhosphoSitePlus" id="P57729"/>
<dbReference type="SwissPalm" id="P57729"/>
<dbReference type="BioMuta" id="RAB38"/>
<dbReference type="DMDM" id="12230516"/>
<dbReference type="jPOST" id="P57729"/>
<dbReference type="MassIVE" id="P57729"/>
<dbReference type="PaxDb" id="9606-ENSP00000243662"/>
<dbReference type="PeptideAtlas" id="P57729"/>
<dbReference type="ProteomicsDB" id="57021"/>
<dbReference type="Pumba" id="P57729"/>
<dbReference type="Antibodypedia" id="31470">
    <property type="antibodies" value="220 antibodies from 31 providers"/>
</dbReference>
<dbReference type="DNASU" id="23682"/>
<dbReference type="Ensembl" id="ENST00000243662.11">
    <property type="protein sequence ID" value="ENSP00000243662.5"/>
    <property type="gene ID" value="ENSG00000123892.12"/>
</dbReference>
<dbReference type="GeneID" id="23682"/>
<dbReference type="KEGG" id="hsa:23682"/>
<dbReference type="MANE-Select" id="ENST00000243662.11">
    <property type="protein sequence ID" value="ENSP00000243662.5"/>
    <property type="RefSeq nucleotide sequence ID" value="NM_022337.3"/>
    <property type="RefSeq protein sequence ID" value="NP_071732.1"/>
</dbReference>
<dbReference type="UCSC" id="uc001pcj.3">
    <property type="organism name" value="human"/>
</dbReference>
<dbReference type="AGR" id="HGNC:9776"/>
<dbReference type="CTD" id="23682"/>
<dbReference type="DisGeNET" id="23682"/>
<dbReference type="GeneCards" id="RAB38"/>
<dbReference type="HGNC" id="HGNC:9776">
    <property type="gene designation" value="RAB38"/>
</dbReference>
<dbReference type="HPA" id="ENSG00000123892">
    <property type="expression patterns" value="Tissue enhanced (esophagus, skin)"/>
</dbReference>
<dbReference type="MIM" id="606281">
    <property type="type" value="gene"/>
</dbReference>
<dbReference type="neXtProt" id="NX_P57729"/>
<dbReference type="OpenTargets" id="ENSG00000123892"/>
<dbReference type="PharmGKB" id="PA34129"/>
<dbReference type="VEuPathDB" id="HostDB:ENSG00000123892"/>
<dbReference type="eggNOG" id="KOG4423">
    <property type="taxonomic scope" value="Eukaryota"/>
</dbReference>
<dbReference type="GeneTree" id="ENSGT00940000157301"/>
<dbReference type="HOGENOM" id="CLU_041217_10_6_1"/>
<dbReference type="InParanoid" id="P57729"/>
<dbReference type="OMA" id="MHYKSTI"/>
<dbReference type="OrthoDB" id="245989at2759"/>
<dbReference type="PAN-GO" id="P57729">
    <property type="GO annotations" value="6 GO annotations based on evolutionary models"/>
</dbReference>
<dbReference type="PhylomeDB" id="P57729"/>
<dbReference type="TreeFam" id="TF324491"/>
<dbReference type="PathwayCommons" id="P57729"/>
<dbReference type="Reactome" id="R-HSA-8873719">
    <property type="pathway name" value="RAB geranylgeranylation"/>
</dbReference>
<dbReference type="Reactome" id="R-HSA-8876198">
    <property type="pathway name" value="RAB GEFs exchange GTP for GDP on RABs"/>
</dbReference>
<dbReference type="SignaLink" id="P57729"/>
<dbReference type="SIGNOR" id="P57729"/>
<dbReference type="BioGRID-ORCS" id="23682">
    <property type="hits" value="8 hits in 1145 CRISPR screens"/>
</dbReference>
<dbReference type="ChiTaRS" id="RAB38">
    <property type="organism name" value="human"/>
</dbReference>
<dbReference type="GeneWiki" id="RAB38"/>
<dbReference type="GenomeRNAi" id="23682"/>
<dbReference type="Pharos" id="P57729">
    <property type="development level" value="Tbio"/>
</dbReference>
<dbReference type="PRO" id="PR:P57729"/>
<dbReference type="Proteomes" id="UP000005640">
    <property type="component" value="Chromosome 11"/>
</dbReference>
<dbReference type="RNAct" id="P57729">
    <property type="molecule type" value="protein"/>
</dbReference>
<dbReference type="Bgee" id="ENSG00000123892">
    <property type="expression patterns" value="Expressed in gingival epithelium and 123 other cell types or tissues"/>
</dbReference>
<dbReference type="ExpressionAtlas" id="P57729">
    <property type="expression patterns" value="baseline and differential"/>
</dbReference>
<dbReference type="GO" id="GO:0044297">
    <property type="term" value="C:cell body"/>
    <property type="evidence" value="ECO:0007669"/>
    <property type="project" value="Ensembl"/>
</dbReference>
<dbReference type="GO" id="GO:0005829">
    <property type="term" value="C:cytosol"/>
    <property type="evidence" value="ECO:0000304"/>
    <property type="project" value="Reactome"/>
</dbReference>
<dbReference type="GO" id="GO:0005769">
    <property type="term" value="C:early endosome"/>
    <property type="evidence" value="ECO:0000314"/>
    <property type="project" value="ParkinsonsUK-UCL"/>
</dbReference>
<dbReference type="GO" id="GO:0012505">
    <property type="term" value="C:endomembrane system"/>
    <property type="evidence" value="ECO:0000318"/>
    <property type="project" value="GO_Central"/>
</dbReference>
<dbReference type="GO" id="GO:0005764">
    <property type="term" value="C:lysosome"/>
    <property type="evidence" value="ECO:0000314"/>
    <property type="project" value="ParkinsonsUK-UCL"/>
</dbReference>
<dbReference type="GO" id="GO:0042470">
    <property type="term" value="C:melanosome"/>
    <property type="evidence" value="ECO:0000314"/>
    <property type="project" value="ParkinsonsUK-UCL"/>
</dbReference>
<dbReference type="GO" id="GO:0033162">
    <property type="term" value="C:melanosome membrane"/>
    <property type="evidence" value="ECO:0000314"/>
    <property type="project" value="UniProtKB"/>
</dbReference>
<dbReference type="GO" id="GO:0016020">
    <property type="term" value="C:membrane"/>
    <property type="evidence" value="ECO:0000314"/>
    <property type="project" value="ParkinsonsUK-UCL"/>
</dbReference>
<dbReference type="GO" id="GO:0044233">
    <property type="term" value="C:mitochondria-associated endoplasmic reticulum membrane contact site"/>
    <property type="evidence" value="ECO:0000314"/>
    <property type="project" value="ParkinsonsUK-UCL"/>
</dbReference>
<dbReference type="GO" id="GO:0005739">
    <property type="term" value="C:mitochondrion"/>
    <property type="evidence" value="ECO:0000314"/>
    <property type="project" value="ParkinsonsUK-UCL"/>
</dbReference>
<dbReference type="GO" id="GO:0048471">
    <property type="term" value="C:perinuclear region of cytoplasm"/>
    <property type="evidence" value="ECO:0007669"/>
    <property type="project" value="Ensembl"/>
</dbReference>
<dbReference type="GO" id="GO:0045335">
    <property type="term" value="C:phagocytic vesicle"/>
    <property type="evidence" value="ECO:0000314"/>
    <property type="project" value="UniProtKB"/>
</dbReference>
<dbReference type="GO" id="GO:0030670">
    <property type="term" value="C:phagocytic vesicle membrane"/>
    <property type="evidence" value="ECO:0007669"/>
    <property type="project" value="UniProtKB-SubCell"/>
</dbReference>
<dbReference type="GO" id="GO:0005886">
    <property type="term" value="C:plasma membrane"/>
    <property type="evidence" value="ECO:0007669"/>
    <property type="project" value="UniProtKB-SubCell"/>
</dbReference>
<dbReference type="GO" id="GO:0005802">
    <property type="term" value="C:trans-Golgi network"/>
    <property type="evidence" value="ECO:0000318"/>
    <property type="project" value="GO_Central"/>
</dbReference>
<dbReference type="GO" id="GO:0035650">
    <property type="term" value="F:AP-1 adaptor complex binding"/>
    <property type="evidence" value="ECO:0000353"/>
    <property type="project" value="ParkinsonsUK-UCL"/>
</dbReference>
<dbReference type="GO" id="GO:0035651">
    <property type="term" value="F:AP-3 adaptor complex binding"/>
    <property type="evidence" value="ECO:0000353"/>
    <property type="project" value="ParkinsonsUK-UCL"/>
</dbReference>
<dbReference type="GO" id="GO:0036461">
    <property type="term" value="F:BLOC-2 complex binding"/>
    <property type="evidence" value="ECO:0000353"/>
    <property type="project" value="ParkinsonsUK-UCL"/>
</dbReference>
<dbReference type="GO" id="GO:0005525">
    <property type="term" value="F:GTP binding"/>
    <property type="evidence" value="ECO:0000303"/>
    <property type="project" value="UniProtKB"/>
</dbReference>
<dbReference type="GO" id="GO:0030742">
    <property type="term" value="F:GTP-dependent protein binding"/>
    <property type="evidence" value="ECO:0000353"/>
    <property type="project" value="ParkinsonsUK-UCL"/>
</dbReference>
<dbReference type="GO" id="GO:0003924">
    <property type="term" value="F:GTPase activity"/>
    <property type="evidence" value="ECO:0000318"/>
    <property type="project" value="GO_Central"/>
</dbReference>
<dbReference type="GO" id="GO:0035646">
    <property type="term" value="P:endosome to melanosome transport"/>
    <property type="evidence" value="ECO:0000315"/>
    <property type="project" value="ParkinsonsUK-UCL"/>
</dbReference>
<dbReference type="GO" id="GO:0006886">
    <property type="term" value="P:intracellular protein transport"/>
    <property type="evidence" value="ECO:0000318"/>
    <property type="project" value="GO_Central"/>
</dbReference>
<dbReference type="GO" id="GO:1903232">
    <property type="term" value="P:melanosome assembly"/>
    <property type="evidence" value="ECO:0000314"/>
    <property type="project" value="UniProtKB"/>
</dbReference>
<dbReference type="GO" id="GO:0032438">
    <property type="term" value="P:melanosome organization"/>
    <property type="evidence" value="ECO:0000318"/>
    <property type="project" value="GO_Central"/>
</dbReference>
<dbReference type="GO" id="GO:0007005">
    <property type="term" value="P:mitochondrion organization"/>
    <property type="evidence" value="ECO:0000315"/>
    <property type="project" value="ParkinsonsUK-UCL"/>
</dbReference>
<dbReference type="GO" id="GO:0090383">
    <property type="term" value="P:phagosome acidification"/>
    <property type="evidence" value="ECO:0000315"/>
    <property type="project" value="UniProtKB"/>
</dbReference>
<dbReference type="GO" id="GO:0060155">
    <property type="term" value="P:platelet dense granule organization"/>
    <property type="evidence" value="ECO:0007669"/>
    <property type="project" value="Ensembl"/>
</dbReference>
<dbReference type="GO" id="GO:0048023">
    <property type="term" value="P:positive regulation of melanin biosynthetic process"/>
    <property type="evidence" value="ECO:0007669"/>
    <property type="project" value="Ensembl"/>
</dbReference>
<dbReference type="GO" id="GO:2001247">
    <property type="term" value="P:positive regulation of phosphatidylcholine biosynthetic process"/>
    <property type="evidence" value="ECO:0007669"/>
    <property type="project" value="Ensembl"/>
</dbReference>
<dbReference type="GO" id="GO:1904377">
    <property type="term" value="P:positive regulation of protein localization to cell periphery"/>
    <property type="evidence" value="ECO:0007669"/>
    <property type="project" value="Ensembl"/>
</dbReference>
<dbReference type="GO" id="GO:0072657">
    <property type="term" value="P:protein localization to membrane"/>
    <property type="evidence" value="ECO:0000315"/>
    <property type="project" value="ParkinsonsUK-UCL"/>
</dbReference>
<dbReference type="GO" id="GO:0015031">
    <property type="term" value="P:protein transport"/>
    <property type="evidence" value="ECO:0000303"/>
    <property type="project" value="UniProtKB"/>
</dbReference>
<dbReference type="GO" id="GO:0007264">
    <property type="term" value="P:small GTPase-mediated signal transduction"/>
    <property type="evidence" value="ECO:0000303"/>
    <property type="project" value="UniProtKB"/>
</dbReference>
<dbReference type="GO" id="GO:0016192">
    <property type="term" value="P:vesicle-mediated transport"/>
    <property type="evidence" value="ECO:0007669"/>
    <property type="project" value="InterPro"/>
</dbReference>
<dbReference type="CDD" id="cd04107">
    <property type="entry name" value="Rab32_Rab38"/>
    <property type="match status" value="1"/>
</dbReference>
<dbReference type="FunFam" id="3.40.50.300:FF:000222">
    <property type="entry name" value="RAB32, member RAS oncogene family"/>
    <property type="match status" value="1"/>
</dbReference>
<dbReference type="Gene3D" id="3.40.50.300">
    <property type="entry name" value="P-loop containing nucleotide triphosphate hydrolases"/>
    <property type="match status" value="1"/>
</dbReference>
<dbReference type="InterPro" id="IPR027417">
    <property type="entry name" value="P-loop_NTPase"/>
</dbReference>
<dbReference type="InterPro" id="IPR030697">
    <property type="entry name" value="Rab29/Rab38/Rab32"/>
</dbReference>
<dbReference type="InterPro" id="IPR005225">
    <property type="entry name" value="Small_GTP-bd"/>
</dbReference>
<dbReference type="InterPro" id="IPR001806">
    <property type="entry name" value="Small_GTPase"/>
</dbReference>
<dbReference type="NCBIfam" id="TIGR00231">
    <property type="entry name" value="small_GTP"/>
    <property type="match status" value="1"/>
</dbReference>
<dbReference type="PANTHER" id="PTHR47981">
    <property type="entry name" value="RAB FAMILY"/>
    <property type="match status" value="1"/>
</dbReference>
<dbReference type="PANTHER" id="PTHR47981:SF43">
    <property type="entry name" value="RAS-RELATED PROTEIN RAB"/>
    <property type="match status" value="1"/>
</dbReference>
<dbReference type="Pfam" id="PF00071">
    <property type="entry name" value="Ras"/>
    <property type="match status" value="1"/>
</dbReference>
<dbReference type="PRINTS" id="PR00449">
    <property type="entry name" value="RASTRNSFRMNG"/>
</dbReference>
<dbReference type="SMART" id="SM00175">
    <property type="entry name" value="RAB"/>
    <property type="match status" value="1"/>
</dbReference>
<dbReference type="SMART" id="SM00176">
    <property type="entry name" value="RAN"/>
    <property type="match status" value="1"/>
</dbReference>
<dbReference type="SMART" id="SM00173">
    <property type="entry name" value="RAS"/>
    <property type="match status" value="1"/>
</dbReference>
<dbReference type="SMART" id="SM00174">
    <property type="entry name" value="RHO"/>
    <property type="match status" value="1"/>
</dbReference>
<dbReference type="SUPFAM" id="SSF52540">
    <property type="entry name" value="P-loop containing nucleoside triphosphate hydrolases"/>
    <property type="match status" value="1"/>
</dbReference>
<dbReference type="PROSITE" id="PS51419">
    <property type="entry name" value="RAB"/>
    <property type="match status" value="1"/>
</dbReference>
<accession>P57729</accession>
<accession>Q53XK7</accession>
<evidence type="ECO:0000250" key="1">
    <source>
        <dbReference type="UniProtKB" id="Q13637"/>
    </source>
</evidence>
<evidence type="ECO:0000250" key="2">
    <source>
        <dbReference type="UniProtKB" id="Q8QZZ8"/>
    </source>
</evidence>
<evidence type="ECO:0000255" key="3"/>
<evidence type="ECO:0000269" key="4">
    <source>
    </source>
</evidence>
<evidence type="ECO:0000269" key="5">
    <source>
    </source>
</evidence>
<evidence type="ECO:0000269" key="6">
    <source>
    </source>
</evidence>
<evidence type="ECO:0000269" key="7">
    <source>
    </source>
</evidence>
<evidence type="ECO:0000269" key="8">
    <source>
    </source>
</evidence>
<evidence type="ECO:0000269" key="9">
    <source>
    </source>
</evidence>
<evidence type="ECO:0000269" key="10">
    <source ref="12"/>
</evidence>
<evidence type="ECO:0000305" key="11"/>
<evidence type="ECO:0000305" key="12">
    <source>
    </source>
</evidence>
<evidence type="ECO:0000312" key="13">
    <source>
        <dbReference type="HGNC" id="HGNC:9776"/>
    </source>
</evidence>
<evidence type="ECO:0007744" key="14">
    <source>
        <dbReference type="PDB" id="6S5H"/>
    </source>
</evidence>
<evidence type="ECO:0007829" key="15">
    <source>
        <dbReference type="PDB" id="6HDU"/>
    </source>
</evidence>
<gene>
    <name evidence="13" type="primary">RAB38</name>
</gene>
<proteinExistence type="evidence at protein level"/>
<feature type="chain" id="PRO_0000121251" description="Ras-related protein Rab-38">
    <location>
        <begin position="1"/>
        <end position="211"/>
    </location>
</feature>
<feature type="short sequence motif" description="Switch 1" evidence="1">
    <location>
        <begin position="32"/>
        <end position="46"/>
    </location>
</feature>
<feature type="short sequence motif" description="Switch 2" evidence="1">
    <location>
        <begin position="68"/>
        <end position="81"/>
    </location>
</feature>
<feature type="binding site" evidence="10 14">
    <location>
        <position position="19"/>
    </location>
    <ligand>
        <name>GTP</name>
        <dbReference type="ChEBI" id="CHEBI:37565"/>
    </ligand>
</feature>
<feature type="binding site" evidence="10 14">
    <location>
        <position position="20"/>
    </location>
    <ligand>
        <name>GTP</name>
        <dbReference type="ChEBI" id="CHEBI:37565"/>
    </ligand>
</feature>
<feature type="binding site" evidence="10 14">
    <location>
        <position position="21"/>
    </location>
    <ligand>
        <name>GTP</name>
        <dbReference type="ChEBI" id="CHEBI:37565"/>
    </ligand>
</feature>
<feature type="binding site" evidence="10 14">
    <location>
        <position position="22"/>
    </location>
    <ligand>
        <name>GTP</name>
        <dbReference type="ChEBI" id="CHEBI:37565"/>
    </ligand>
</feature>
<feature type="binding site" evidence="10 14">
    <location>
        <position position="23"/>
    </location>
    <ligand>
        <name>GTP</name>
        <dbReference type="ChEBI" id="CHEBI:37565"/>
    </ligand>
</feature>
<feature type="binding site" evidence="10 14">
    <location>
        <position position="23"/>
    </location>
    <ligand>
        <name>Mg(2+)</name>
        <dbReference type="ChEBI" id="CHEBI:18420"/>
    </ligand>
</feature>
<feature type="binding site" evidence="10 14">
    <location>
        <position position="24"/>
    </location>
    <ligand>
        <name>GTP</name>
        <dbReference type="ChEBI" id="CHEBI:37565"/>
    </ligand>
</feature>
<feature type="binding site" evidence="10 14">
    <location>
        <position position="35"/>
    </location>
    <ligand>
        <name>GTP</name>
        <dbReference type="ChEBI" id="CHEBI:37565"/>
    </ligand>
</feature>
<feature type="binding site" evidence="10 14">
    <location>
        <position position="36"/>
    </location>
    <ligand>
        <name>GTP</name>
        <dbReference type="ChEBI" id="CHEBI:37565"/>
    </ligand>
</feature>
<feature type="binding site" evidence="10 14">
    <location>
        <position position="38"/>
    </location>
    <ligand>
        <name>GTP</name>
        <dbReference type="ChEBI" id="CHEBI:37565"/>
    </ligand>
</feature>
<feature type="binding site" evidence="10 14">
    <location>
        <position position="41"/>
    </location>
    <ligand>
        <name>GTP</name>
        <dbReference type="ChEBI" id="CHEBI:37565"/>
    </ligand>
</feature>
<feature type="binding site" evidence="10 14">
    <location>
        <position position="41"/>
    </location>
    <ligand>
        <name>Mg(2+)</name>
        <dbReference type="ChEBI" id="CHEBI:18420"/>
    </ligand>
</feature>
<feature type="binding site" evidence="10 14">
    <location>
        <position position="65"/>
    </location>
    <ligand>
        <name>Mg(2+)</name>
        <dbReference type="ChEBI" id="CHEBI:18420"/>
    </ligand>
</feature>
<feature type="binding site" evidence="10 14">
    <location>
        <position position="68"/>
    </location>
    <ligand>
        <name>GTP</name>
        <dbReference type="ChEBI" id="CHEBI:37565"/>
    </ligand>
</feature>
<feature type="binding site" evidence="10 14">
    <location>
        <position position="128"/>
    </location>
    <ligand>
        <name>GTP</name>
        <dbReference type="ChEBI" id="CHEBI:37565"/>
    </ligand>
</feature>
<feature type="binding site" evidence="10 14">
    <location>
        <position position="130"/>
    </location>
    <ligand>
        <name>GTP</name>
        <dbReference type="ChEBI" id="CHEBI:37565"/>
    </ligand>
</feature>
<feature type="binding site" evidence="10 14">
    <location>
        <position position="160"/>
    </location>
    <ligand>
        <name>GTP</name>
        <dbReference type="ChEBI" id="CHEBI:37565"/>
    </ligand>
</feature>
<feature type="binding site" evidence="10 14">
    <location>
        <position position="161"/>
    </location>
    <ligand>
        <name>GTP</name>
        <dbReference type="ChEBI" id="CHEBI:37565"/>
    </ligand>
</feature>
<feature type="site" description="Not methylated">
    <location>
        <position position="208"/>
    </location>
</feature>
<feature type="lipid moiety-binding region" description="S-palmitoyl cysteine" evidence="3">
    <location>
        <position position="205"/>
    </location>
</feature>
<feature type="lipid moiety-binding region" description="S-geranylgeranyl cysteine" evidence="12">
    <location>
        <position position="208"/>
    </location>
</feature>
<feature type="sequence variant" id="VAR_036415" description="In a colorectal cancer sample; somatic mutation." evidence="5">
    <original>K</original>
    <variation>T</variation>
    <location>
        <position position="111"/>
    </location>
</feature>
<feature type="strand" evidence="15">
    <location>
        <begin position="6"/>
        <end position="17"/>
    </location>
</feature>
<feature type="helix" evidence="15">
    <location>
        <begin position="22"/>
        <end position="31"/>
    </location>
</feature>
<feature type="strand" evidence="15">
    <location>
        <begin position="43"/>
        <end position="54"/>
    </location>
</feature>
<feature type="strand" evidence="15">
    <location>
        <begin position="57"/>
        <end position="66"/>
    </location>
</feature>
<feature type="helix" evidence="15">
    <location>
        <begin position="68"/>
        <end position="72"/>
    </location>
</feature>
<feature type="helix" evidence="15">
    <location>
        <begin position="76"/>
        <end position="80"/>
    </location>
</feature>
<feature type="strand" evidence="15">
    <location>
        <begin position="85"/>
        <end position="91"/>
    </location>
</feature>
<feature type="helix" evidence="15">
    <location>
        <begin position="95"/>
        <end position="111"/>
    </location>
</feature>
<feature type="strand" evidence="15">
    <location>
        <begin position="121"/>
        <end position="127"/>
    </location>
</feature>
<feature type="helix" evidence="15">
    <location>
        <begin position="143"/>
        <end position="150"/>
    </location>
</feature>
<feature type="strand" evidence="15">
    <location>
        <begin position="153"/>
        <end position="157"/>
    </location>
</feature>
<feature type="turn" evidence="15">
    <location>
        <begin position="160"/>
        <end position="163"/>
    </location>
</feature>
<feature type="helix" evidence="15">
    <location>
        <begin position="166"/>
        <end position="179"/>
    </location>
</feature>
<name>RAB38_HUMAN</name>
<comment type="function">
    <text evidence="1 2 8 9">The small GTPases Rab are key regulators of intracellular membrane trafficking, from the formation of transport vesicles to their fusion with membranes. Rabs cycle between an inactive GDP-bound form and an active GTP-bound form that is able to recruit to membranes different sets of downstream effectors directly responsible for vesicle formation, movement, tethering and fusion (By similarity). RAB38 may be involved in melanosomal transport and docking. Involved in the proper sorting of TYRP1. Involved in peripheral melanosomal distribution of TYRP1 in melanocytes; the function, which probably is implicating vesicle-trafficking, includes cooperation with ANKRD27 and VAMP7 (By similarity). Plays a role in the maturation of phagosomes that engulf pathogens, such as S.aureus and M.tuberculosis (PubMed:21255211). Plays an important role in the control of melanin production and melanosome biogenesis (PubMed:23084991). In concert with RAB32, regulates the proper trafficking of melanogenic enzymes TYR, TYRP1 and DCT/TYRP2 to melanosomes in melanocytes (By similarity).</text>
</comment>
<comment type="catalytic activity">
    <reaction evidence="1">
        <text>GTP + H2O = GDP + phosphate + H(+)</text>
        <dbReference type="Rhea" id="RHEA:19669"/>
        <dbReference type="ChEBI" id="CHEBI:15377"/>
        <dbReference type="ChEBI" id="CHEBI:15378"/>
        <dbReference type="ChEBI" id="CHEBI:37565"/>
        <dbReference type="ChEBI" id="CHEBI:43474"/>
        <dbReference type="ChEBI" id="CHEBI:58189"/>
        <dbReference type="EC" id="3.6.5.2"/>
    </reaction>
    <physiologicalReaction direction="left-to-right" evidence="1">
        <dbReference type="Rhea" id="RHEA:19670"/>
    </physiologicalReaction>
</comment>
<comment type="cofactor">
    <cofactor evidence="10">
        <name>Mg(2+)</name>
        <dbReference type="ChEBI" id="CHEBI:18420"/>
    </cofactor>
</comment>
<comment type="activity regulation">
    <text evidence="2 11">Regulated by guanine nucleotide exchange factors (GEFs) including the BLOC-3 complex composed of HPS1 and HPS4 which promote the exchange of bound GDP for free GTP. Regulated by GTPase activating proteins (GAPs) including SGSM2 which increase the GTP hydrolysis activity (By similarity). Inhibited by GDP dissociation inhibitors (GDIs) (Probable).</text>
</comment>
<comment type="subunit">
    <text evidence="7">Interacts with ANKRD27 (PubMed:19403694).</text>
</comment>
<comment type="interaction">
    <interactant intactId="EBI-6552718">
        <id>P57729</id>
    </interactant>
    <interactant intactId="EBI-640741">
        <id>P01023</id>
        <label>A2M</label>
    </interactant>
    <organismsDiffer>false</organismsDiffer>
    <experiments>3</experiments>
</comment>
<comment type="interaction">
    <interactant intactId="EBI-6552718">
        <id>P57729</id>
    </interactant>
    <interactant intactId="EBI-10968534">
        <id>P50570-2</id>
        <label>DNM2</label>
    </interactant>
    <organismsDiffer>false</organismsDiffer>
    <experiments>3</experiments>
</comment>
<comment type="interaction">
    <interactant intactId="EBI-6552718">
        <id>P57729</id>
    </interactant>
    <interactant intactId="EBI-744302">
        <id>P14136</id>
        <label>GFAP</label>
    </interactant>
    <organismsDiffer>false</organismsDiffer>
    <experiments>3</experiments>
</comment>
<comment type="interaction">
    <interactant intactId="EBI-6552718">
        <id>P57729</id>
    </interactant>
    <interactant intactId="EBI-1055254">
        <id>Q8WXH2</id>
        <label>JPH3</label>
    </interactant>
    <organismsDiffer>false</organismsDiffer>
    <experiments>3</experiments>
</comment>
<comment type="interaction">
    <interactant intactId="EBI-6552718">
        <id>P57729</id>
    </interactant>
    <interactant intactId="EBI-5323863">
        <id>Q5S007</id>
        <label>LRRK2</label>
    </interactant>
    <organismsDiffer>false</organismsDiffer>
    <experiments>4</experiments>
</comment>
<comment type="interaction">
    <interactant intactId="EBI-6552718">
        <id>P57729</id>
    </interactant>
    <interactant intactId="EBI-1189067">
        <id>P51608</id>
        <label>MECP2</label>
    </interactant>
    <organismsDiffer>false</organismsDiffer>
    <experiments>3</experiments>
</comment>
<comment type="interaction">
    <interactant intactId="EBI-6552718">
        <id>P57729</id>
    </interactant>
    <interactant intactId="EBI-713665">
        <id>P19404</id>
        <label>NDUFV2</label>
    </interactant>
    <organismsDiffer>false</organismsDiffer>
    <experiments>3</experiments>
</comment>
<comment type="interaction">
    <interactant intactId="EBI-6552718">
        <id>P57729</id>
    </interactant>
    <interactant intactId="EBI-395421">
        <id>Q16637</id>
        <label>SMN2</label>
    </interactant>
    <organismsDiffer>false</organismsDiffer>
    <experiments>3</experiments>
</comment>
<comment type="interaction">
    <interactant intactId="EBI-6552718">
        <id>P57729</id>
    </interactant>
    <interactant intactId="EBI-25847109">
        <id>O14656-2</id>
        <label>TOR1A</label>
    </interactant>
    <organismsDiffer>false</organismsDiffer>
    <experiments>3</experiments>
</comment>
<comment type="subcellular location">
    <subcellularLocation>
        <location evidence="11">Cell membrane</location>
        <topology evidence="11">Lipid-anchor</topology>
        <orientation evidence="11">Cytoplasmic side</orientation>
    </subcellularLocation>
    <subcellularLocation>
        <location evidence="4">Melanosome</location>
    </subcellularLocation>
    <subcellularLocation>
        <location evidence="8">Cytoplasmic vesicle</location>
        <location evidence="8">Phagosome</location>
    </subcellularLocation>
    <subcellularLocation>
        <location evidence="11">Cytoplasmic vesicle</location>
        <location evidence="11">Phagosome membrane</location>
        <topology evidence="11">Lipid-anchor</topology>
        <orientation evidence="11">Cytoplasmic side</orientation>
    </subcellularLocation>
    <subcellularLocation>
        <location evidence="9">Melanosome membrane</location>
    </subcellularLocation>
    <text evidence="8 9">Recruited to phagosomes containing S.aureus or M.tuberculosis (PubMed:21255211). The BLOC-3 complex, a heterodimer of HPS1 and HPS4 promotes its membrane localization (PubMed:23084991).</text>
</comment>
<comment type="tissue specificity">
    <text>Expressed in melanocytes.</text>
</comment>
<comment type="domain">
    <text evidence="1">Switch 1, switch 2 and the interswitch regions are characteristic of Rab GTPases and mediate the interactions with Rab downstream effectors. The switch regions undergo conformational changes upon nucleotide binding which drive interaction with specific sets of effector proteins, with most effectors only binding to GTP-bound Rab.</text>
</comment>
<comment type="PTM">
    <text evidence="6">Although at least one in vitro system can process and methylate the prenylated C-terminal, in an in vitro system that normally express Rab-38 and in vivo the prenylated C-terminal is not proteolytically processed and not methylated.</text>
</comment>
<comment type="similarity">
    <text evidence="11">Belongs to the small GTPase superfamily. Rab family.</text>
</comment>
<reference key="1">
    <citation type="journal article" date="2000" name="Cancer Res.">
        <title>Serological cloning of a melanocyte rab guanosine 5'-triphosphate-binding protein and a chromosome condensation protein from a melanoma complementary DNA library.</title>
        <authorList>
            <person name="Jaeger D."/>
            <person name="Stockert E."/>
            <person name="Jaeger E."/>
            <person name="Guere A.O."/>
            <person name="Scanlan M.J."/>
            <person name="Knuth A."/>
            <person name="Old L.J."/>
            <person name="Chen Y.-T."/>
        </authorList>
    </citation>
    <scope>NUCLEOTIDE SEQUENCE [MRNA]</scope>
</reference>
<reference key="2">
    <citation type="submission" date="2003-08" db="EMBL/GenBank/DDBJ databases">
        <title>Cloning of human full-length CDSs in BD Creator(TM) system donor vector.</title>
        <authorList>
            <person name="Kalnine N."/>
            <person name="Chen X."/>
            <person name="Rolfs A."/>
            <person name="Halleck A."/>
            <person name="Hines L."/>
            <person name="Eisenstein S."/>
            <person name="Koundinya M."/>
            <person name="Raphael J."/>
            <person name="Moreira D."/>
            <person name="Kelley T."/>
            <person name="LaBaer J."/>
            <person name="Lin Y."/>
            <person name="Phelan M."/>
            <person name="Farmer A."/>
        </authorList>
    </citation>
    <scope>NUCLEOTIDE SEQUENCE [LARGE SCALE MRNA]</scope>
</reference>
<reference key="3">
    <citation type="submission" date="2005-08" db="EMBL/GenBank/DDBJ databases">
        <authorList>
            <consortium name="SeattleSNPs variation discovery resource"/>
        </authorList>
    </citation>
    <scope>NUCLEOTIDE SEQUENCE [GENOMIC DNA]</scope>
</reference>
<reference key="4">
    <citation type="journal article" date="2004" name="Genome Res.">
        <title>The status, quality, and expansion of the NIH full-length cDNA project: the Mammalian Gene Collection (MGC).</title>
        <authorList>
            <consortium name="The MGC Project Team"/>
        </authorList>
    </citation>
    <scope>NUCLEOTIDE SEQUENCE [LARGE SCALE MRNA]</scope>
    <source>
        <tissue>Skin</tissue>
    </source>
</reference>
<reference key="5">
    <citation type="journal article" date="2003" name="J. Proteome Res.">
        <title>Proteomic analysis of early melanosomes: identification of novel melanosomal proteins.</title>
        <authorList>
            <person name="Basrur V."/>
            <person name="Yang F."/>
            <person name="Kushimoto T."/>
            <person name="Higashimoto Y."/>
            <person name="Yasumoto K."/>
            <person name="Valencia J."/>
            <person name="Muller J."/>
            <person name="Vieira W.D."/>
            <person name="Watabe H."/>
            <person name="Shabanowitz J."/>
            <person name="Hearing V.J."/>
            <person name="Hunt D.F."/>
            <person name="Appella E."/>
        </authorList>
    </citation>
    <scope>SUBCELLULAR LOCATION [LARGE SCALE ANALYSIS]</scope>
    <source>
        <tissue>Melanoma</tissue>
    </source>
</reference>
<reference key="6">
    <citation type="journal article" date="2006" name="J. Proteome Res.">
        <title>Proteomic and bioinformatic characterization of the biogenesis and function of melanosomes.</title>
        <authorList>
            <person name="Chi A."/>
            <person name="Valencia J.C."/>
            <person name="Hu Z.-Z."/>
            <person name="Watabe H."/>
            <person name="Yamaguchi H."/>
            <person name="Mangini N.J."/>
            <person name="Huang H."/>
            <person name="Canfield V.A."/>
            <person name="Cheng K.C."/>
            <person name="Yang F."/>
            <person name="Abe R."/>
            <person name="Yamagishi S."/>
            <person name="Shabanowitz J."/>
            <person name="Hearing V.J."/>
            <person name="Wu C."/>
            <person name="Appella E."/>
            <person name="Hunt D.F."/>
        </authorList>
    </citation>
    <scope>SUBCELLULAR LOCATION [LARGE SCALE ANALYSIS]</scope>
    <source>
        <tissue>Melanoma</tissue>
    </source>
</reference>
<reference key="7">
    <citation type="journal article" date="2007" name="J. Biol. Chem.">
        <title>Rab GTPases containing a CAAX motif are processed post-geranylgeranylation by proteolysis and methylation.</title>
        <authorList>
            <person name="Leung K.F."/>
            <person name="Baron R."/>
            <person name="Ali B.R."/>
            <person name="Magee A.I."/>
            <person name="Seabra M.C."/>
        </authorList>
    </citation>
    <scope>ISOPRENYLATION AT CYS-208</scope>
</reference>
<reference key="8">
    <citation type="journal article" date="2009" name="Mol. Biol. Cell">
        <title>Varp is a novel Rab32/38-binding protein that regulates Tyrp1 trafficking in melanocytes.</title>
        <authorList>
            <person name="Tamura K."/>
            <person name="Ohbayashi N."/>
            <person name="Maruta Y."/>
            <person name="Kanno E."/>
            <person name="Itoh T."/>
            <person name="Fukuda M."/>
        </authorList>
    </citation>
    <scope>INTERACTION WITH ANKRD27</scope>
</reference>
<reference key="9">
    <citation type="journal article" date="2011" name="BMC Syst. Biol.">
        <title>Initial characterization of the human central proteome.</title>
        <authorList>
            <person name="Burkard T.R."/>
            <person name="Planyavsky M."/>
            <person name="Kaupe I."/>
            <person name="Breitwieser F.P."/>
            <person name="Buerckstuemmer T."/>
            <person name="Bennett K.L."/>
            <person name="Superti-Furga G."/>
            <person name="Colinge J."/>
        </authorList>
    </citation>
    <scope>IDENTIFICATION BY MASS SPECTROMETRY [LARGE SCALE ANALYSIS]</scope>
</reference>
<reference key="10">
    <citation type="journal article" date="2011" name="Traffic">
        <title>Rab GTPases regulating phagosome maturation are differentially recruited to mycobacterial phagosomes.</title>
        <authorList>
            <person name="Seto S."/>
            <person name="Tsujimura K."/>
            <person name="Koide Y."/>
        </authorList>
    </citation>
    <scope>FUNCTION</scope>
    <scope>SUBCELLULAR LOCATION</scope>
</reference>
<reference key="11">
    <citation type="journal article" date="2012" name="Curr. Biol.">
        <title>BLOC-3 mutated in Hermansky-Pudlak syndrome is a Rab32/38 guanine nucleotide exchange factor.</title>
        <authorList>
            <person name="Gerondopoulos A."/>
            <person name="Langemeyer L."/>
            <person name="Liang J.R."/>
            <person name="Linford A."/>
            <person name="Barr F.A."/>
        </authorList>
    </citation>
    <scope>FUNCTION</scope>
    <scope>SUBCELLULAR LOCATION</scope>
</reference>
<reference evidence="14" key="12">
    <citation type="submission" date="2019-07" db="PDB data bank">
        <title>Structure of the human RAB38 in complex with GTP.</title>
        <authorList>
            <person name="Diaz-Saez L."/>
            <person name="a Jung S."/>
            <person name="Huber K."/>
            <person name="von Delft F."/>
            <person name="Arrowsmith C.H."/>
            <person name="Edwards A."/>
            <person name="Bountra C."/>
        </authorList>
    </citation>
    <scope>X-RAY CRYSTALLOGRAPHY (2.00 ANGSTROMS) OF 1-207 IN COMPLEX WITH GTP AND MG(2+)</scope>
    <scope>COFACTOR</scope>
</reference>
<reference key="13">
    <citation type="journal article" date="2006" name="Science">
        <title>The consensus coding sequences of human breast and colorectal cancers.</title>
        <authorList>
            <person name="Sjoeblom T."/>
            <person name="Jones S."/>
            <person name="Wood L.D."/>
            <person name="Parsons D.W."/>
            <person name="Lin J."/>
            <person name="Barber T.D."/>
            <person name="Mandelker D."/>
            <person name="Leary R.J."/>
            <person name="Ptak J."/>
            <person name="Silliman N."/>
            <person name="Szabo S."/>
            <person name="Buckhaults P."/>
            <person name="Farrell C."/>
            <person name="Meeh P."/>
            <person name="Markowitz S.D."/>
            <person name="Willis J."/>
            <person name="Dawson D."/>
            <person name="Willson J.K.V."/>
            <person name="Gazdar A.F."/>
            <person name="Hartigan J."/>
            <person name="Wu L."/>
            <person name="Liu C."/>
            <person name="Parmigiani G."/>
            <person name="Park B.H."/>
            <person name="Bachman K.E."/>
            <person name="Papadopoulos N."/>
            <person name="Vogelstein B."/>
            <person name="Kinzler K.W."/>
            <person name="Velculescu V.E."/>
        </authorList>
    </citation>
    <scope>VARIANT [LARGE SCALE ANALYSIS] THR-111</scope>
</reference>
<protein>
    <recommendedName>
        <fullName>Ras-related protein Rab-38</fullName>
        <ecNumber evidence="1">3.6.5.2</ecNumber>
    </recommendedName>
    <alternativeName>
        <fullName>Melanoma antigen NY-MEL-1</fullName>
    </alternativeName>
</protein>
<organism>
    <name type="scientific">Homo sapiens</name>
    <name type="common">Human</name>
    <dbReference type="NCBI Taxonomy" id="9606"/>
    <lineage>
        <taxon>Eukaryota</taxon>
        <taxon>Metazoa</taxon>
        <taxon>Chordata</taxon>
        <taxon>Craniata</taxon>
        <taxon>Vertebrata</taxon>
        <taxon>Euteleostomi</taxon>
        <taxon>Mammalia</taxon>
        <taxon>Eutheria</taxon>
        <taxon>Euarchontoglires</taxon>
        <taxon>Primates</taxon>
        <taxon>Haplorrhini</taxon>
        <taxon>Catarrhini</taxon>
        <taxon>Hominidae</taxon>
        <taxon>Homo</taxon>
    </lineage>
</organism>